<accession>O22436</accession>
<reference key="1">
    <citation type="journal article" date="1997" name="Plant Mol. Biol.">
        <title>Isolation and characterisation of tobacco (Nicotiana tabacum) cDNA clones encoding proteins involved in magnesium chelation into protoporphyrin IX.</title>
        <authorList>
            <person name="Kruse E."/>
            <person name="Mock H.-P."/>
            <person name="Grimm B."/>
        </authorList>
    </citation>
    <scope>NUCLEOTIDE SEQUENCE [MRNA]</scope>
    <source>
        <strain>cv. SR1</strain>
    </source>
</reference>
<evidence type="ECO:0000250" key="1"/>
<evidence type="ECO:0000255" key="2"/>
<evidence type="ECO:0000305" key="3"/>
<dbReference type="EC" id="6.6.1.1"/>
<dbReference type="EMBL" id="AF014053">
    <property type="protein sequence ID" value="AAB97153.1"/>
    <property type="molecule type" value="mRNA"/>
</dbReference>
<dbReference type="PIR" id="T01790">
    <property type="entry name" value="T01790"/>
</dbReference>
<dbReference type="SMR" id="O22436"/>
<dbReference type="STRING" id="4097.O22436"/>
<dbReference type="PaxDb" id="4097-O22436"/>
<dbReference type="BioCyc" id="MetaCyc:MONOMER-11779"/>
<dbReference type="UniPathway" id="UPA00668"/>
<dbReference type="Proteomes" id="UP000084051">
    <property type="component" value="Unplaced"/>
</dbReference>
<dbReference type="GO" id="GO:0009570">
    <property type="term" value="C:chloroplast stroma"/>
    <property type="evidence" value="ECO:0000318"/>
    <property type="project" value="GO_Central"/>
</dbReference>
<dbReference type="GO" id="GO:0005524">
    <property type="term" value="F:ATP binding"/>
    <property type="evidence" value="ECO:0007669"/>
    <property type="project" value="UniProtKB-KW"/>
</dbReference>
<dbReference type="GO" id="GO:0016887">
    <property type="term" value="F:ATP hydrolysis activity"/>
    <property type="evidence" value="ECO:0007669"/>
    <property type="project" value="InterPro"/>
</dbReference>
<dbReference type="GO" id="GO:0016851">
    <property type="term" value="F:magnesium chelatase activity"/>
    <property type="evidence" value="ECO:0007669"/>
    <property type="project" value="UniProtKB-EC"/>
</dbReference>
<dbReference type="GO" id="GO:0015995">
    <property type="term" value="P:chlorophyll biosynthetic process"/>
    <property type="evidence" value="ECO:0000318"/>
    <property type="project" value="GO_Central"/>
</dbReference>
<dbReference type="GO" id="GO:0015979">
    <property type="term" value="P:photosynthesis"/>
    <property type="evidence" value="ECO:0007669"/>
    <property type="project" value="UniProtKB-KW"/>
</dbReference>
<dbReference type="CDD" id="cd00009">
    <property type="entry name" value="AAA"/>
    <property type="match status" value="1"/>
</dbReference>
<dbReference type="FunFam" id="1.10.8.80:FF:000001">
    <property type="entry name" value="Mg-protoporphyrin IX chelatase"/>
    <property type="match status" value="1"/>
</dbReference>
<dbReference type="FunFam" id="3.40.50.300:FF:000601">
    <property type="entry name" value="Mg-protoporphyrin IX chelatase"/>
    <property type="match status" value="1"/>
</dbReference>
<dbReference type="Gene3D" id="1.10.8.80">
    <property type="entry name" value="Magnesium chelatase subunit I, C-Terminal domain"/>
    <property type="match status" value="1"/>
</dbReference>
<dbReference type="Gene3D" id="3.40.50.300">
    <property type="entry name" value="P-loop containing nucleotide triphosphate hydrolases"/>
    <property type="match status" value="1"/>
</dbReference>
<dbReference type="InterPro" id="IPR003593">
    <property type="entry name" value="AAA+_ATPase"/>
</dbReference>
<dbReference type="InterPro" id="IPR045006">
    <property type="entry name" value="CHLI-like"/>
</dbReference>
<dbReference type="InterPro" id="IPR041628">
    <property type="entry name" value="ChlI/MoxR_AAA_lid"/>
</dbReference>
<dbReference type="InterPro" id="IPR011775">
    <property type="entry name" value="Mg_chelatase_ATPase-isu"/>
</dbReference>
<dbReference type="InterPro" id="IPR000523">
    <property type="entry name" value="Mg_chelatse_chII-like_cat_dom"/>
</dbReference>
<dbReference type="InterPro" id="IPR027417">
    <property type="entry name" value="P-loop_NTPase"/>
</dbReference>
<dbReference type="NCBIfam" id="TIGR02030">
    <property type="entry name" value="BchI-ChlI"/>
    <property type="match status" value="1"/>
</dbReference>
<dbReference type="PANTHER" id="PTHR32039">
    <property type="entry name" value="MAGNESIUM-CHELATASE SUBUNIT CHLI"/>
    <property type="match status" value="1"/>
</dbReference>
<dbReference type="PANTHER" id="PTHR32039:SF9">
    <property type="entry name" value="MAGNESIUM-CHELATASE SUBUNIT CHLI-2, CHLOROPLASTIC"/>
    <property type="match status" value="1"/>
</dbReference>
<dbReference type="Pfam" id="PF17863">
    <property type="entry name" value="AAA_lid_2"/>
    <property type="match status" value="1"/>
</dbReference>
<dbReference type="Pfam" id="PF01078">
    <property type="entry name" value="Mg_chelatase"/>
    <property type="match status" value="1"/>
</dbReference>
<dbReference type="SMART" id="SM00382">
    <property type="entry name" value="AAA"/>
    <property type="match status" value="1"/>
</dbReference>
<dbReference type="SUPFAM" id="SSF52540">
    <property type="entry name" value="P-loop containing nucleoside triphosphate hydrolases"/>
    <property type="match status" value="1"/>
</dbReference>
<name>CHLI_TOBAC</name>
<feature type="transit peptide" description="Chloroplast" evidence="2">
    <location>
        <begin position="1"/>
        <end position="50"/>
    </location>
</feature>
<feature type="chain" id="PRO_0000002804" description="Magnesium-chelatase subunit ChlI, chloroplastic">
    <location>
        <begin position="51"/>
        <end position="426"/>
    </location>
</feature>
<feature type="binding site" evidence="2">
    <location>
        <begin position="121"/>
        <end position="128"/>
    </location>
    <ligand>
        <name>ATP</name>
        <dbReference type="ChEBI" id="CHEBI:30616"/>
    </ligand>
</feature>
<feature type="disulfide bond" evidence="1">
    <location>
        <begin position="104"/>
        <end position="195"/>
    </location>
</feature>
<feature type="disulfide bond" description="Inhibitory under oxidizing conditions" evidence="1">
    <location>
        <begin position="356"/>
        <end position="398"/>
    </location>
</feature>
<sequence length="426" mass="46627">MASLLGTSSSAAAAILASTPLSSRSCKPAVFSLFPSSGQSQGRKFYGGIRVPVKKGRSQFHVAISNVATEINLLKNRVRNLLEESQRPVYPFAAIVGQDEMKLCLLLNVIDPKIGGVMIMGDRGTGKSTTVRSLVDLLPEIKVISGDPFNSDPDDQEVMSAEVRDKLRSGQQLPISRTKINMVDLPLGATEDRVCGTIDIEKALTEGVKAFEPGLLAKANRGILYVDEVNLLDDHLVDVLLDSAASGWNTVEREGISISHPARFILIGSGNPEEGELRPQLLDRFGMHAQVGTVRDAELRVKIVEERARFDKNPKEFRESYKAEQEKLQNQIDSARNALSAVTIDHDLRVKISKVCAELNVDGLRGDIVTNRAARALAALKGRDKVTPEDIATVIPNCLRHRLRKDPLESIDSGVLVVEKFYEVFA</sequence>
<proteinExistence type="evidence at transcript level"/>
<comment type="function">
    <text evidence="1">Involved in chlorophyll biosynthesis. Catalyzes the insertion of magnesium ion into protoporphyrin IX to yield Mg-protoporphyrin IX. The magnesium-chelatase is a complex of three subunits, CHLI, CHLD and CHLH. The reaction takes place in two steps, with an ATP-dependent activation followed by an ATP-dependent chelation step (By similarity).</text>
</comment>
<comment type="catalytic activity">
    <reaction>
        <text>protoporphyrin IX + Mg(2+) + ATP + H2O = Mg-protoporphyrin IX + ADP + phosphate + 3 H(+)</text>
        <dbReference type="Rhea" id="RHEA:13961"/>
        <dbReference type="ChEBI" id="CHEBI:15377"/>
        <dbReference type="ChEBI" id="CHEBI:15378"/>
        <dbReference type="ChEBI" id="CHEBI:18420"/>
        <dbReference type="ChEBI" id="CHEBI:30616"/>
        <dbReference type="ChEBI" id="CHEBI:43474"/>
        <dbReference type="ChEBI" id="CHEBI:57306"/>
        <dbReference type="ChEBI" id="CHEBI:60492"/>
        <dbReference type="ChEBI" id="CHEBI:456216"/>
        <dbReference type="EC" id="6.6.1.1"/>
    </reaction>
</comment>
<comment type="activity regulation">
    <text evidence="1">Redox regulation; active in reducing conditions, inactive in oxidizing conditions. Thioredoxins f and m mediate the reversible reductive activation of oxidized CHLI (By similarity).</text>
</comment>
<comment type="pathway">
    <text>Porphyrin-containing compound metabolism; chlorophyll biosynthesis.</text>
</comment>
<comment type="subunit">
    <text>The magnesium chelatase complex is a heterotrimer consisting of subunits CHLI, CHLD and CHLH.</text>
</comment>
<comment type="subcellular location">
    <subcellularLocation>
        <location evidence="3">Plastid</location>
        <location evidence="3">Chloroplast</location>
    </subcellularLocation>
</comment>
<comment type="tissue specificity">
    <text>Strongly expressed in young leaves and to a lesser extent in mature leaves.</text>
</comment>
<comment type="similarity">
    <text evidence="3">Belongs to the Mg-chelatase subunits D/I family.</text>
</comment>
<protein>
    <recommendedName>
        <fullName>Magnesium-chelatase subunit ChlI, chloroplastic</fullName>
        <shortName>Mg-chelatase subunit I-1</shortName>
        <ecNumber>6.6.1.1</ecNumber>
    </recommendedName>
    <alternativeName>
        <fullName>Mg-protoporphyrin IX chelatase subunit ChlI</fullName>
    </alternativeName>
</protein>
<keyword id="KW-0067">ATP-binding</keyword>
<keyword id="KW-0149">Chlorophyll biosynthesis</keyword>
<keyword id="KW-0150">Chloroplast</keyword>
<keyword id="KW-1015">Disulfide bond</keyword>
<keyword id="KW-0436">Ligase</keyword>
<keyword id="KW-0547">Nucleotide-binding</keyword>
<keyword id="KW-0602">Photosynthesis</keyword>
<keyword id="KW-0934">Plastid</keyword>
<keyword id="KW-1185">Reference proteome</keyword>
<keyword id="KW-0809">Transit peptide</keyword>
<organism>
    <name type="scientific">Nicotiana tabacum</name>
    <name type="common">Common tobacco</name>
    <dbReference type="NCBI Taxonomy" id="4097"/>
    <lineage>
        <taxon>Eukaryota</taxon>
        <taxon>Viridiplantae</taxon>
        <taxon>Streptophyta</taxon>
        <taxon>Embryophyta</taxon>
        <taxon>Tracheophyta</taxon>
        <taxon>Spermatophyta</taxon>
        <taxon>Magnoliopsida</taxon>
        <taxon>eudicotyledons</taxon>
        <taxon>Gunneridae</taxon>
        <taxon>Pentapetalae</taxon>
        <taxon>asterids</taxon>
        <taxon>lamiids</taxon>
        <taxon>Solanales</taxon>
        <taxon>Solanaceae</taxon>
        <taxon>Nicotianoideae</taxon>
        <taxon>Nicotianeae</taxon>
        <taxon>Nicotiana</taxon>
    </lineage>
</organism>
<gene>
    <name type="primary">CHLI</name>
</gene>